<reference key="1">
    <citation type="journal article" date="1999" name="Genomics">
        <title>Identification of genes (SPON2 and C20orf2) differentially expressed between cancerous and noncancerous lung cells by mRNA differential display.</title>
        <authorList>
            <person name="Manda R."/>
            <person name="Kohno T."/>
            <person name="Matsuno Y."/>
            <person name="Takenoshita S."/>
            <person name="Kuwano H."/>
            <person name="Yokota J."/>
        </authorList>
    </citation>
    <scope>NUCLEOTIDE SEQUENCE [MRNA] (ISOFORM 1)</scope>
</reference>
<reference key="2">
    <citation type="journal article" date="1999" name="Cytogenet. Cell Genet.">
        <title>Assignment of human proliferation associated p100 gene (C20orf1) to human chromosome band 20q11.2 by in situ hybridization.</title>
        <authorList>
            <person name="Zhang Y."/>
            <person name="Heidebrecht H.J."/>
            <person name="Rott A."/>
            <person name="Schlegelberger B."/>
            <person name="Parwaresch R."/>
        </authorList>
    </citation>
    <scope>NUCLEOTIDE SEQUENCE [MRNA] (ISOFORM 1)</scope>
</reference>
<reference key="3">
    <citation type="submission" date="1999-03" db="EMBL/GenBank/DDBJ databases">
        <title>Fetal gene preferentially expressed in colorectal cancer.</title>
        <authorList>
            <person name="Nezu J."/>
        </authorList>
    </citation>
    <scope>NUCLEOTIDE SEQUENCE [MRNA] (ISOFORM 1)</scope>
    <source>
        <tissue>Liver</tissue>
    </source>
</reference>
<reference key="4">
    <citation type="journal article" date="2002" name="J. Immunol.">
        <title>Large scale identification of human hepatocellular carcinoma-associated antigens by autoantibodies.</title>
        <authorList>
            <person name="Wang Y."/>
            <person name="Han K.-J."/>
            <person name="Pang X.-W."/>
            <person name="Vaughan H.A."/>
            <person name="Qu W."/>
            <person name="Dong X.-Y."/>
            <person name="Peng J.-R."/>
            <person name="Zhao H.-T."/>
            <person name="Rui J.-A."/>
            <person name="Leng X.-S."/>
            <person name="Cebon J."/>
            <person name="Burgess A.W."/>
            <person name="Chen W.-F."/>
        </authorList>
    </citation>
    <scope>NUCLEOTIDE SEQUENCE [MRNA] (ISOFORMS 1 AND 2)</scope>
    <source>
        <tissue>Hepatoma</tissue>
    </source>
</reference>
<reference key="5">
    <citation type="journal article" date="2001" name="Nature">
        <title>The DNA sequence and comparative analysis of human chromosome 20.</title>
        <authorList>
            <person name="Deloukas P."/>
            <person name="Matthews L.H."/>
            <person name="Ashurst J.L."/>
            <person name="Burton J."/>
            <person name="Gilbert J.G.R."/>
            <person name="Jones M."/>
            <person name="Stavrides G."/>
            <person name="Almeida J.P."/>
            <person name="Babbage A.K."/>
            <person name="Bagguley C.L."/>
            <person name="Bailey J."/>
            <person name="Barlow K.F."/>
            <person name="Bates K.N."/>
            <person name="Beard L.M."/>
            <person name="Beare D.M."/>
            <person name="Beasley O.P."/>
            <person name="Bird C.P."/>
            <person name="Blakey S.E."/>
            <person name="Bridgeman A.M."/>
            <person name="Brown A.J."/>
            <person name="Buck D."/>
            <person name="Burrill W.D."/>
            <person name="Butler A.P."/>
            <person name="Carder C."/>
            <person name="Carter N.P."/>
            <person name="Chapman J.C."/>
            <person name="Clamp M."/>
            <person name="Clark G."/>
            <person name="Clark L.N."/>
            <person name="Clark S.Y."/>
            <person name="Clee C.M."/>
            <person name="Clegg S."/>
            <person name="Cobley V.E."/>
            <person name="Collier R.E."/>
            <person name="Connor R.E."/>
            <person name="Corby N.R."/>
            <person name="Coulson A."/>
            <person name="Coville G.J."/>
            <person name="Deadman R."/>
            <person name="Dhami P.D."/>
            <person name="Dunn M."/>
            <person name="Ellington A.G."/>
            <person name="Frankland J.A."/>
            <person name="Fraser A."/>
            <person name="French L."/>
            <person name="Garner P."/>
            <person name="Grafham D.V."/>
            <person name="Griffiths C."/>
            <person name="Griffiths M.N.D."/>
            <person name="Gwilliam R."/>
            <person name="Hall R.E."/>
            <person name="Hammond S."/>
            <person name="Harley J.L."/>
            <person name="Heath P.D."/>
            <person name="Ho S."/>
            <person name="Holden J.L."/>
            <person name="Howden P.J."/>
            <person name="Huckle E."/>
            <person name="Hunt A.R."/>
            <person name="Hunt S.E."/>
            <person name="Jekosch K."/>
            <person name="Johnson C.M."/>
            <person name="Johnson D."/>
            <person name="Kay M.P."/>
            <person name="Kimberley A.M."/>
            <person name="King A."/>
            <person name="Knights A."/>
            <person name="Laird G.K."/>
            <person name="Lawlor S."/>
            <person name="Lehvaeslaiho M.H."/>
            <person name="Leversha M.A."/>
            <person name="Lloyd C."/>
            <person name="Lloyd D.M."/>
            <person name="Lovell J.D."/>
            <person name="Marsh V.L."/>
            <person name="Martin S.L."/>
            <person name="McConnachie L.J."/>
            <person name="McLay K."/>
            <person name="McMurray A.A."/>
            <person name="Milne S.A."/>
            <person name="Mistry D."/>
            <person name="Moore M.J.F."/>
            <person name="Mullikin J.C."/>
            <person name="Nickerson T."/>
            <person name="Oliver K."/>
            <person name="Parker A."/>
            <person name="Patel R."/>
            <person name="Pearce T.A.V."/>
            <person name="Peck A.I."/>
            <person name="Phillimore B.J.C.T."/>
            <person name="Prathalingam S.R."/>
            <person name="Plumb R.W."/>
            <person name="Ramsay H."/>
            <person name="Rice C.M."/>
            <person name="Ross M.T."/>
            <person name="Scott C.E."/>
            <person name="Sehra H.K."/>
            <person name="Shownkeen R."/>
            <person name="Sims S."/>
            <person name="Skuce C.D."/>
            <person name="Smith M.L."/>
            <person name="Soderlund C."/>
            <person name="Steward C.A."/>
            <person name="Sulston J.E."/>
            <person name="Swann R.M."/>
            <person name="Sycamore N."/>
            <person name="Taylor R."/>
            <person name="Tee L."/>
            <person name="Thomas D.W."/>
            <person name="Thorpe A."/>
            <person name="Tracey A."/>
            <person name="Tromans A.C."/>
            <person name="Vaudin M."/>
            <person name="Wall M."/>
            <person name="Wallis J.M."/>
            <person name="Whitehead S.L."/>
            <person name="Whittaker P."/>
            <person name="Willey D.L."/>
            <person name="Williams L."/>
            <person name="Williams S.A."/>
            <person name="Wilming L."/>
            <person name="Wray P.W."/>
            <person name="Hubbard T."/>
            <person name="Durbin R.M."/>
            <person name="Bentley D.R."/>
            <person name="Beck S."/>
            <person name="Rogers J."/>
        </authorList>
    </citation>
    <scope>NUCLEOTIDE SEQUENCE [LARGE SCALE GENOMIC DNA]</scope>
</reference>
<reference key="6">
    <citation type="submission" date="2005-07" db="EMBL/GenBank/DDBJ databases">
        <authorList>
            <person name="Mural R.J."/>
            <person name="Istrail S."/>
            <person name="Sutton G."/>
            <person name="Florea L."/>
            <person name="Halpern A.L."/>
            <person name="Mobarry C.M."/>
            <person name="Lippert R."/>
            <person name="Walenz B."/>
            <person name="Shatkay H."/>
            <person name="Dew I."/>
            <person name="Miller J.R."/>
            <person name="Flanigan M.J."/>
            <person name="Edwards N.J."/>
            <person name="Bolanos R."/>
            <person name="Fasulo D."/>
            <person name="Halldorsson B.V."/>
            <person name="Hannenhalli S."/>
            <person name="Turner R."/>
            <person name="Yooseph S."/>
            <person name="Lu F."/>
            <person name="Nusskern D.R."/>
            <person name="Shue B.C."/>
            <person name="Zheng X.H."/>
            <person name="Zhong F."/>
            <person name="Delcher A.L."/>
            <person name="Huson D.H."/>
            <person name="Kravitz S.A."/>
            <person name="Mouchard L."/>
            <person name="Reinert K."/>
            <person name="Remington K.A."/>
            <person name="Clark A.G."/>
            <person name="Waterman M.S."/>
            <person name="Eichler E.E."/>
            <person name="Adams M.D."/>
            <person name="Hunkapiller M.W."/>
            <person name="Myers E.W."/>
            <person name="Venter J.C."/>
        </authorList>
    </citation>
    <scope>NUCLEOTIDE SEQUENCE [LARGE SCALE GENOMIC DNA]</scope>
</reference>
<reference key="7">
    <citation type="journal article" date="2004" name="Genome Res.">
        <title>The status, quality, and expansion of the NIH full-length cDNA project: the Mammalian Gene Collection (MGC).</title>
        <authorList>
            <consortium name="The MGC Project Team"/>
        </authorList>
    </citation>
    <scope>NUCLEOTIDE SEQUENCE [LARGE SCALE MRNA] (ISOFORM 1)</scope>
    <source>
        <tissue>Brain</tissue>
        <tissue>Lung</tissue>
    </source>
</reference>
<reference key="8">
    <citation type="journal article" date="2007" name="BMC Genomics">
        <title>The full-ORF clone resource of the German cDNA consortium.</title>
        <authorList>
            <person name="Bechtel S."/>
            <person name="Rosenfelder H."/>
            <person name="Duda A."/>
            <person name="Schmidt C.P."/>
            <person name="Ernst U."/>
            <person name="Wellenreuther R."/>
            <person name="Mehrle A."/>
            <person name="Schuster C."/>
            <person name="Bahr A."/>
            <person name="Bloecker H."/>
            <person name="Heubner D."/>
            <person name="Hoerlein A."/>
            <person name="Michel G."/>
            <person name="Wedler H."/>
            <person name="Koehrer K."/>
            <person name="Ottenwaelder B."/>
            <person name="Poustka A."/>
            <person name="Wiemann S."/>
            <person name="Schupp I."/>
        </authorList>
    </citation>
    <scope>NUCLEOTIDE SEQUENCE [LARGE SCALE MRNA] OF 21-747 (ISOFORM 1)</scope>
    <source>
        <tissue>Testis</tissue>
    </source>
</reference>
<reference key="9">
    <citation type="journal article" date="2000" name="J. Cell Biol.">
        <title>TPX2, a novel Xenopus MAP involved in spindle pole organization.</title>
        <authorList>
            <person name="Wittmann T."/>
            <person name="Wilm M."/>
            <person name="Karsenti E."/>
            <person name="Vernos I."/>
        </authorList>
    </citation>
    <scope>NUCLEOTIDE SEQUENCE [MRNA] OF 42-747 (ISOFORM 1)</scope>
</reference>
<reference key="10">
    <citation type="journal article" date="1997" name="Blood">
        <title>p100: a novel proliferation-associated nuclear protein specifically restricted to cell cycle phases S, G2, and M.</title>
        <authorList>
            <person name="Heidebrecht H.J."/>
            <person name="Buck F."/>
            <person name="Steinmann J."/>
            <person name="Sprenger R."/>
            <person name="Wacker H.H."/>
            <person name="Parwaresch R."/>
        </authorList>
    </citation>
    <scope>CHARACTERIZATION</scope>
</reference>
<reference key="11">
    <citation type="journal article" date="2006" name="Cell">
        <title>Global, in vivo, and site-specific phosphorylation dynamics in signaling networks.</title>
        <authorList>
            <person name="Olsen J.V."/>
            <person name="Blagoev B."/>
            <person name="Gnad F."/>
            <person name="Macek B."/>
            <person name="Kumar C."/>
            <person name="Mortensen P."/>
            <person name="Mann M."/>
        </authorList>
    </citation>
    <scope>IDENTIFICATION BY MASS SPECTROMETRY [LARGE SCALE ANALYSIS]</scope>
    <source>
        <tissue>Cervix carcinoma</tissue>
    </source>
</reference>
<reference key="12">
    <citation type="journal article" date="2006" name="Nat. Biotechnol.">
        <title>A probability-based approach for high-throughput protein phosphorylation analysis and site localization.</title>
        <authorList>
            <person name="Beausoleil S.A."/>
            <person name="Villen J."/>
            <person name="Gerber S.A."/>
            <person name="Rush J."/>
            <person name="Gygi S.P."/>
        </authorList>
    </citation>
    <scope>PHOSPHORYLATION [LARGE SCALE ANALYSIS] AT THR-369 AND SER-738</scope>
    <scope>IDENTIFICATION BY MASS SPECTROMETRY [LARGE SCALE ANALYSIS]</scope>
    <source>
        <tissue>Cervix carcinoma</tissue>
    </source>
</reference>
<reference key="13">
    <citation type="journal article" date="2007" name="J. Proteome Res.">
        <title>Improved titanium dioxide enrichment of phosphopeptides from HeLa cells and high confident phosphopeptide identification by cross-validation of MS/MS and MS/MS/MS spectra.</title>
        <authorList>
            <person name="Yu L.R."/>
            <person name="Zhu Z."/>
            <person name="Chan K.C."/>
            <person name="Issaq H.J."/>
            <person name="Dimitrov D.S."/>
            <person name="Veenstra T.D."/>
        </authorList>
    </citation>
    <scope>PHOSPHORYLATION [LARGE SCALE ANALYSIS] AT SER-486</scope>
    <scope>IDENTIFICATION BY MASS SPECTROMETRY [LARGE SCALE ANALYSIS]</scope>
    <source>
        <tissue>Cervix carcinoma</tissue>
    </source>
</reference>
<reference key="14">
    <citation type="journal article" date="2008" name="J. Cell Biol.">
        <title>Building a spindle of the correct length in human cells requires the interaction between TPX2 and Aurora A.</title>
        <authorList>
            <person name="Bird A.W."/>
            <person name="Hyman A.A."/>
        </authorList>
    </citation>
    <scope>FUNCTION</scope>
    <scope>INTERACTION WITH AURKA</scope>
    <scope>SUBCELLULAR LOCATION</scope>
</reference>
<reference key="15">
    <citation type="journal article" date="2008" name="Mol. Cell">
        <title>Kinase-selective enrichment enables quantitative phosphoproteomics of the kinome across the cell cycle.</title>
        <authorList>
            <person name="Daub H."/>
            <person name="Olsen J.V."/>
            <person name="Bairlein M."/>
            <person name="Gnad F."/>
            <person name="Oppermann F.S."/>
            <person name="Korner R."/>
            <person name="Greff Z."/>
            <person name="Keri G."/>
            <person name="Stemmann O."/>
            <person name="Mann M."/>
        </authorList>
    </citation>
    <scope>PHOSPHORYLATION [LARGE SCALE ANALYSIS] AT SER-486 AND SER-738</scope>
    <scope>IDENTIFICATION BY MASS SPECTROMETRY [LARGE SCALE ANALYSIS]</scope>
    <source>
        <tissue>Cervix carcinoma</tissue>
    </source>
</reference>
<reference key="16">
    <citation type="journal article" date="2008" name="Proc. Natl. Acad. Sci. U.S.A.">
        <title>A quantitative atlas of mitotic phosphorylation.</title>
        <authorList>
            <person name="Dephoure N."/>
            <person name="Zhou C."/>
            <person name="Villen J."/>
            <person name="Beausoleil S.A."/>
            <person name="Bakalarski C.E."/>
            <person name="Elledge S.J."/>
            <person name="Gygi S.P."/>
        </authorList>
    </citation>
    <scope>PHOSPHORYLATION [LARGE SCALE ANALYSIS] AT THR-59; THR-72; SER-310; THR-338; SER-486 AND SER-738</scope>
    <scope>IDENTIFICATION BY MASS SPECTROMETRY [LARGE SCALE ANALYSIS]</scope>
    <source>
        <tissue>Cervix carcinoma</tissue>
    </source>
</reference>
<reference key="17">
    <citation type="journal article" date="2009" name="Anal. Chem.">
        <title>Lys-N and trypsin cover complementary parts of the phosphoproteome in a refined SCX-based approach.</title>
        <authorList>
            <person name="Gauci S."/>
            <person name="Helbig A.O."/>
            <person name="Slijper M."/>
            <person name="Krijgsveld J."/>
            <person name="Heck A.J."/>
            <person name="Mohammed S."/>
        </authorList>
    </citation>
    <scope>IDENTIFICATION BY MASS SPECTROMETRY [LARGE SCALE ANALYSIS]</scope>
</reference>
<reference key="18">
    <citation type="journal article" date="2009" name="J. Cell Sci.">
        <title>Dynamic release of nuclear RanGTP triggers TPX2-dependent microtubule assembly during the apoptotic execution phase.</title>
        <authorList>
            <person name="Moss D.K."/>
            <person name="Wilde A."/>
            <person name="Lane J.D."/>
        </authorList>
    </citation>
    <scope>FUNCTION</scope>
    <scope>SUBCELLULAR LOCATION</scope>
</reference>
<reference key="19">
    <citation type="journal article" date="2009" name="Mol. Cell. Proteomics">
        <title>Large-scale proteomics analysis of the human kinome.</title>
        <authorList>
            <person name="Oppermann F.S."/>
            <person name="Gnad F."/>
            <person name="Olsen J.V."/>
            <person name="Hornberger R."/>
            <person name="Greff Z."/>
            <person name="Keri G."/>
            <person name="Mann M."/>
            <person name="Daub H."/>
        </authorList>
    </citation>
    <scope>PHOSPHORYLATION [LARGE SCALE ANALYSIS] AT SER-738</scope>
    <scope>IDENTIFICATION BY MASS SPECTROMETRY [LARGE SCALE ANALYSIS]</scope>
</reference>
<reference key="20">
    <citation type="journal article" date="2009" name="Science">
        <title>Lysine acetylation targets protein complexes and co-regulates major cellular functions.</title>
        <authorList>
            <person name="Choudhary C."/>
            <person name="Kumar C."/>
            <person name="Gnad F."/>
            <person name="Nielsen M.L."/>
            <person name="Rehman M."/>
            <person name="Walther T.C."/>
            <person name="Olsen J.V."/>
            <person name="Mann M."/>
        </authorList>
    </citation>
    <scope>ACETYLATION [LARGE SCALE ANALYSIS] AT LYS-305</scope>
    <scope>IDENTIFICATION BY MASS SPECTROMETRY [LARGE SCALE ANALYSIS]</scope>
</reference>
<reference key="21">
    <citation type="journal article" date="2010" name="Sci. Signal.">
        <title>Quantitative phosphoproteomics reveals widespread full phosphorylation site occupancy during mitosis.</title>
        <authorList>
            <person name="Olsen J.V."/>
            <person name="Vermeulen M."/>
            <person name="Santamaria A."/>
            <person name="Kumar C."/>
            <person name="Miller M.L."/>
            <person name="Jensen L.J."/>
            <person name="Gnad F."/>
            <person name="Cox J."/>
            <person name="Jensen T.S."/>
            <person name="Nigg E.A."/>
            <person name="Brunak S."/>
            <person name="Mann M."/>
        </authorList>
    </citation>
    <scope>PHOSPHORYLATION [LARGE SCALE ANALYSIS] AT THR-72; SER-292; SER-293; SER-486 AND SER-738</scope>
    <scope>IDENTIFICATION BY MASS SPECTROMETRY [LARGE SCALE ANALYSIS]</scope>
    <source>
        <tissue>Cervix carcinoma</tissue>
    </source>
</reference>
<reference key="22">
    <citation type="journal article" date="2011" name="J. Cell Sci.">
        <title>The nuclear scaffold protein SAF-A is required for kinetochore-microtubule attachment and contributes to the targeting of Aurora-A to mitotic spindles.</title>
        <authorList>
            <person name="Ma N."/>
            <person name="Matsunaga S."/>
            <person name="Morimoto A."/>
            <person name="Sakashita G."/>
            <person name="Urano T."/>
            <person name="Uchiyama S."/>
            <person name="Fukui K."/>
        </authorList>
    </citation>
    <scope>INTERACTION WITH HNRNPU</scope>
</reference>
<reference key="23">
    <citation type="journal article" date="2011" name="Sci. Signal.">
        <title>System-wide temporal characterization of the proteome and phosphoproteome of human embryonic stem cell differentiation.</title>
        <authorList>
            <person name="Rigbolt K.T."/>
            <person name="Prokhorova T.A."/>
            <person name="Akimov V."/>
            <person name="Henningsen J."/>
            <person name="Johansen P.T."/>
            <person name="Kratchmarova I."/>
            <person name="Kassem M."/>
            <person name="Mann M."/>
            <person name="Olsen J.V."/>
            <person name="Blagoev B."/>
        </authorList>
    </citation>
    <scope>PHOSPHORYLATION [LARGE SCALE ANALYSIS] AT SER-293 AND SER-738</scope>
    <scope>IDENTIFICATION BY MASS SPECTROMETRY [LARGE SCALE ANALYSIS]</scope>
</reference>
<reference key="24">
    <citation type="journal article" date="2013" name="J. Proteome Res.">
        <title>Toward a comprehensive characterization of a human cancer cell phosphoproteome.</title>
        <authorList>
            <person name="Zhou H."/>
            <person name="Di Palma S."/>
            <person name="Preisinger C."/>
            <person name="Peng M."/>
            <person name="Polat A.N."/>
            <person name="Heck A.J."/>
            <person name="Mohammed S."/>
        </authorList>
    </citation>
    <scope>PHOSPHORYLATION [LARGE SCALE ANALYSIS] AT THR-59; THR-72; SER-121; SER-125; THR-147; SER-257; SER-310; SER-359; THR-369; SER-486; THR-499 AND SER-738</scope>
    <scope>IDENTIFICATION BY MASS SPECTROMETRY [LARGE SCALE ANALYSIS]</scope>
    <source>
        <tissue>Cervix carcinoma</tissue>
        <tissue>Erythroleukemia</tissue>
    </source>
</reference>
<reference key="25">
    <citation type="journal article" date="2014" name="Nat. Struct. Mol. Biol.">
        <title>Uncovering global SUMOylation signaling networks in a site-specific manner.</title>
        <authorList>
            <person name="Hendriks I.A."/>
            <person name="D'Souza R.C."/>
            <person name="Yang B."/>
            <person name="Verlaan-de Vries M."/>
            <person name="Mann M."/>
            <person name="Vertegaal A.C."/>
        </authorList>
    </citation>
    <scope>SUMOYLATION [LARGE SCALE ANALYSIS] AT LYS-641</scope>
    <scope>IDENTIFICATION BY MASS SPECTROMETRY [LARGE SCALE ANALYSIS]</scope>
</reference>
<reference key="26">
    <citation type="journal article" date="2015" name="Cell">
        <title>GM130 regulates Golgi-derived spindle assembly by activating TPX2 and capturing microtubules.</title>
        <authorList>
            <person name="Wei J.H."/>
            <person name="Zhang Z.C."/>
            <person name="Wynn R.M."/>
            <person name="Seemann J."/>
        </authorList>
    </citation>
    <scope>FUNCTION</scope>
    <scope>INTERACTION WITH IMPORTIN-ALPHA</scope>
</reference>
<reference key="27">
    <citation type="journal article" date="2015" name="Mol. Cell. Biol.">
        <title>Phosphorylation of SAF-A/hnRNP-U serine 59 by polo-like kinase 1 is required for mitosis.</title>
        <authorList>
            <person name="Douglas P."/>
            <person name="Ye R."/>
            <person name="Morrice N."/>
            <person name="Britton S."/>
            <person name="Trinkle-Mulcahy L."/>
            <person name="Lees-Miller S.P."/>
        </authorList>
    </citation>
    <scope>INTERACTION WITH HNRNPU</scope>
</reference>
<reference key="28">
    <citation type="journal article" date="2017" name="Nat. Struct. Mol. Biol.">
        <title>Site-specific mapping of the human SUMO proteome reveals co-modification with phosphorylation.</title>
        <authorList>
            <person name="Hendriks I.A."/>
            <person name="Lyon D."/>
            <person name="Young C."/>
            <person name="Jensen L.J."/>
            <person name="Vertegaal A.C."/>
            <person name="Nielsen M.L."/>
        </authorList>
    </citation>
    <scope>SUMOYLATION [LARGE SCALE ANALYSIS] AT LYS-477; LYS-500; LYS-641 AND LYS-740</scope>
    <scope>IDENTIFICATION BY MASS SPECTROMETRY [LARGE SCALE ANALYSIS]</scope>
</reference>
<reference key="29">
    <citation type="journal article" date="2023" name="J. Cell Biol.">
        <title>UHRF1 promotes spindle assembly and chromosome congression by catalyzing EG5 polyubiquitination.</title>
        <authorList>
            <person name="Qi X."/>
            <person name="Liu Y."/>
            <person name="Peng Y."/>
            <person name="Fu Y."/>
            <person name="Fu Y."/>
            <person name="Yin L."/>
            <person name="Li X."/>
        </authorList>
    </citation>
    <scope>INTERACTION WITH KIF11</scope>
    <scope>SUBCELLULAR LOCATION</scope>
    <scope>FUNCTION</scope>
</reference>
<reference key="30">
    <citation type="journal article" date="2003" name="Mol. Cell">
        <title>Structural basis of Aurora-A activation by TPX2 at the mitotic spindle.</title>
        <authorList>
            <person name="Bayliss R."/>
            <person name="Sardon T."/>
            <person name="Vernos I."/>
            <person name="Conti E."/>
        </authorList>
    </citation>
    <scope>X-RAY CRYSTALLOGRAPHY (2.5 ANGSTROMS) OF 1-43 IN COMPLEX WITH AURKA</scope>
    <scope>SUBUNIT</scope>
</reference>
<reference key="31">
    <citation type="journal article" date="2008" name="Protein Sci.">
        <title>Modulation of kinase-inhibitor interactions by auxiliary protein binding: crystallography studies on Aurora A interactions with VX-680 and with TPX2.</title>
        <authorList>
            <person name="Zhao B."/>
            <person name="Smallwood A."/>
            <person name="Yang J."/>
            <person name="Koretke K."/>
            <person name="Nurse K."/>
            <person name="Calamari A."/>
            <person name="Kirkpatrick R.B."/>
            <person name="Lai Z."/>
        </authorList>
    </citation>
    <scope>X-RAY CRYSTALLOGRAPHY (2.3 ANGSTROMS) OF 1-43 IN COMPLEX WITH AURKA</scope>
    <scope>SUBUNIT</scope>
</reference>
<reference key="32">
    <citation type="journal article" date="2006" name="Science">
        <title>The consensus coding sequences of human breast and colorectal cancers.</title>
        <authorList>
            <person name="Sjoeblom T."/>
            <person name="Jones S."/>
            <person name="Wood L.D."/>
            <person name="Parsons D.W."/>
            <person name="Lin J."/>
            <person name="Barber T.D."/>
            <person name="Mandelker D."/>
            <person name="Leary R.J."/>
            <person name="Ptak J."/>
            <person name="Silliman N."/>
            <person name="Szabo S."/>
            <person name="Buckhaults P."/>
            <person name="Farrell C."/>
            <person name="Meeh P."/>
            <person name="Markowitz S.D."/>
            <person name="Willis J."/>
            <person name="Dawson D."/>
            <person name="Willson J.K.V."/>
            <person name="Gazdar A.F."/>
            <person name="Hartigan J."/>
            <person name="Wu L."/>
            <person name="Liu C."/>
            <person name="Parmigiani G."/>
            <person name="Park B.H."/>
            <person name="Bachman K.E."/>
            <person name="Papadopoulos N."/>
            <person name="Vogelstein B."/>
            <person name="Kinzler K.W."/>
            <person name="Velculescu V.E."/>
        </authorList>
    </citation>
    <scope>VARIANT [LARGE SCALE ANALYSIS] ASN-464</scope>
</reference>
<proteinExistence type="evidence at protein level"/>
<comment type="function">
    <text evidence="6 7 10">Spindle assembly factor required for normal assembly of mitotic spindles. Required for normal assembly of microtubules during apoptosis. Required for chromatin and/or kinetochore dependent microtubule nucleation. Mediates AURKA localization to spindle microtubules (PubMed:18663142, PubMed:19208764, PubMed:37728657). Activates AURKA by promoting its autophosphorylation at 'Thr-288' and protects this residue against dephosphorylation (PubMed:18663142, PubMed:19208764). TPX2 is inactivated upon binding to importin-alpha (PubMed:26165940). At the onset of mitosis, GOLGA2 interacts with importin-alpha, liberating TPX2 from importin-alpha, allowing TPX2 to activate AURKA kinase and stimulate local microtubule nucleation (PubMed:26165940).</text>
</comment>
<comment type="subunit">
    <text evidence="1 3 5 6 8 9 10 11">Interacts with AURKA (PubMed:14580337, PubMed:18662907, PubMed:18663142). Interacts with importin-alpha; leading to inactivate TPX2 (PubMed:26165940). Interacts with HNRNPU; this interaction recruits HNRNPU to spindle microtubules (MTs) (PubMed:21242313, PubMed:25986610). Interacts with BCL2L10 (By similarity). Interacts with KIF11 (PubMed:37728657).</text>
</comment>
<comment type="interaction">
    <interactant intactId="EBI-1037322">
        <id>Q9ULW0</id>
    </interactant>
    <interactant intactId="EBI-448680">
        <id>O14965</id>
        <label>AURKA</label>
    </interactant>
    <organismsDiffer>false</organismsDiffer>
    <experiments>10</experiments>
</comment>
<comment type="interaction">
    <interactant intactId="EBI-1037322">
        <id>Q9ULW0</id>
    </interactant>
    <interactant intactId="EBI-1049597">
        <id>P27797</id>
        <label>CALR</label>
    </interactant>
    <organismsDiffer>false</organismsDiffer>
    <experiments>3</experiments>
</comment>
<comment type="interaction">
    <interactant intactId="EBI-1037322">
        <id>Q9ULW0</id>
    </interactant>
    <interactant intactId="EBI-727477">
        <id>P12830</id>
        <label>CDH1</label>
    </interactant>
    <organismsDiffer>false</organismsDiffer>
    <experiments>3</experiments>
</comment>
<comment type="interaction">
    <interactant intactId="EBI-1037322">
        <id>Q9ULW0</id>
    </interactant>
    <interactant intactId="EBI-746189">
        <id>Q15078</id>
        <label>CDK5R1</label>
    </interactant>
    <organismsDiffer>false</organismsDiffer>
    <experiments>3</experiments>
</comment>
<comment type="interaction">
    <interactant intactId="EBI-1037322">
        <id>Q9ULW0</id>
    </interactant>
    <interactant intactId="EBI-351007">
        <id>P36957</id>
        <label>DLST</label>
    </interactant>
    <organismsDiffer>false</organismsDiffer>
    <experiments>3</experiments>
</comment>
<comment type="interaction">
    <interactant intactId="EBI-1037322">
        <id>Q9ULW0</id>
    </interactant>
    <interactant intactId="EBI-618309">
        <id>Q08379</id>
        <label>GOLGA2</label>
    </interactant>
    <organismsDiffer>false</organismsDiffer>
    <experiments>6</experiments>
</comment>
<comment type="interaction">
    <interactant intactId="EBI-1037322">
        <id>Q9ULW0</id>
    </interactant>
    <interactant intactId="EBI-401755">
        <id>P62993</id>
        <label>GRB2</label>
    </interactant>
    <organismsDiffer>false</organismsDiffer>
    <experiments>2</experiments>
</comment>
<comment type="interaction">
    <interactant intactId="EBI-1037322">
        <id>Q9ULW0</id>
    </interactant>
    <interactant intactId="EBI-2556203">
        <id>O75330</id>
        <label>HMMR</label>
    </interactant>
    <organismsDiffer>false</organismsDiffer>
    <experiments>5</experiments>
</comment>
<comment type="interaction">
    <interactant intactId="EBI-1037322">
        <id>Q9ULW0</id>
    </interactant>
    <interactant intactId="EBI-389883">
        <id>P16333</id>
        <label>NCK1</label>
    </interactant>
    <organismsDiffer>false</organismsDiffer>
    <experiments>4</experiments>
</comment>
<comment type="interaction">
    <interactant intactId="EBI-1037322">
        <id>Q9ULW0</id>
    </interactant>
    <interactant intactId="EBI-1055945">
        <id>Q8TDX7</id>
        <label>NEK7</label>
    </interactant>
    <organismsDiffer>false</organismsDiffer>
    <experiments>3</experiments>
</comment>
<comment type="interaction">
    <interactant intactId="EBI-1037322">
        <id>Q9ULW0</id>
    </interactant>
    <interactant intactId="EBI-79464">
        <id>P27986</id>
        <label>PIK3R1</label>
    </interactant>
    <organismsDiffer>false</organismsDiffer>
    <experiments>2</experiments>
</comment>
<comment type="subcellular location">
    <subcellularLocation>
        <location evidence="7">Nucleus</location>
    </subcellularLocation>
    <subcellularLocation>
        <location evidence="6 7 11">Cytoplasm</location>
        <location evidence="6 7 11">Cytoskeleton</location>
        <location evidence="6 7 11">Spindle</location>
    </subcellularLocation>
    <subcellularLocation>
        <location evidence="6 7">Cytoplasm</location>
        <location evidence="6 7">Cytoskeleton</location>
        <location evidence="6 7">Spindle pole</location>
    </subcellularLocation>
    <text evidence="7">During mitosis it is strictly associated with the spindle pole and with the mitotic spindle, whereas during S and G2, it is diffusely distributed throughout the nucleus. Is released from the nucleus in apoptotic cells and is detected on apoptotic microtubules.</text>
</comment>
<comment type="alternative products">
    <event type="alternative splicing"/>
    <isoform>
        <id>Q9ULW0-1</id>
        <name>1</name>
        <sequence type="displayed"/>
    </isoform>
    <isoform>
        <id>Q9ULW0-2</id>
        <name>2</name>
        <name>HCA90</name>
        <sequence type="described" ref="VSP_057355"/>
    </isoform>
</comment>
<comment type="tissue specificity">
    <text>Expressed in lung carcinoma cell lines but not in normal lung tissues.</text>
</comment>
<comment type="developmental stage">
    <text>Exclusively expressed in proliferating cells from the transition G1/S until the end of cytokinesis.</text>
</comment>
<comment type="similarity">
    <text evidence="13">Belongs to the TPX2 family.</text>
</comment>
<gene>
    <name type="primary">TPX2</name>
    <name type="synonym">C20orf1</name>
    <name type="synonym">C20orf2</name>
    <name type="synonym">DIL2</name>
    <name type="synonym">HCA519</name>
</gene>
<organism>
    <name type="scientific">Homo sapiens</name>
    <name type="common">Human</name>
    <dbReference type="NCBI Taxonomy" id="9606"/>
    <lineage>
        <taxon>Eukaryota</taxon>
        <taxon>Metazoa</taxon>
        <taxon>Chordata</taxon>
        <taxon>Craniata</taxon>
        <taxon>Vertebrata</taxon>
        <taxon>Euteleostomi</taxon>
        <taxon>Mammalia</taxon>
        <taxon>Eutheria</taxon>
        <taxon>Euarchontoglires</taxon>
        <taxon>Primates</taxon>
        <taxon>Haplorrhini</taxon>
        <taxon>Catarrhini</taxon>
        <taxon>Hominidae</taxon>
        <taxon>Homo</taxon>
    </lineage>
</organism>
<sequence length="747" mass="85653">MSQVKSSYSYDAPSDFINFSSLDDEGDTQNIDSWFEEKANLENKLLGKNGTGGLFQGKTPLRKANLQQAIVTPLKPVDNTYYKEAEKENLVEQSIPSNACSSLEVEAAISRKTPAQPQRRSLRLSAQKDLEQKEKHHVKMKAKRCATPVIIDEILPSKKMKVSNNKKKPEEEGSAHQDTAEKNASSPEKAKGRHTVPCMPPAKQKFLKSTEEQELEKSMKMQQEVVEMRKKNEEFKKLALAGIGQPVKKSVSQVTKSVDFHFRTDERIKQHPKNQEEYKEVNFTSELRKHPSSPARVTKGCTIVKPFNLSQGKKRTFDETVSTYVPLAQQVEDFHKRTPNRYHLRSKKDDINLLPSKSSVTKICRDPQTPVLQTKHRARAVTCKSTAELEAEELEKLQQYKFKARELDPRILEGGPILPKKPPVKPPTEPIGFDLEIEKRIQERESKKKTEDEHFEFHSRPCPTKILEDVVGVPEKKVLPITVPKSPAFALKNRIRMPTKEDEEEDEPVVIKAQPVPHYGVPFKPQIPEARTVEICPFSFDSRDKERQLQKEKKIKELQKGEVPKFKALPLPHFDTINLPEKKVKNVTQIEPFCLETDRRGALKAQTWKHQLEEELRQQKEAACFKARPNTVISQEPFVPKKEKKSVAEGLSGSLVQEPFQLATEKRAKERQELEKRMAEVEAQKAQQLEEARLQEEEQKKEELARLRRELVHKANPIRKYQGLEIKSSDQPLTVPVSPKFSTRFHC</sequence>
<evidence type="ECO:0000250" key="1">
    <source>
        <dbReference type="UniProtKB" id="A2APB8"/>
    </source>
</evidence>
<evidence type="ECO:0000256" key="2">
    <source>
        <dbReference type="SAM" id="MobiDB-lite"/>
    </source>
</evidence>
<evidence type="ECO:0000269" key="3">
    <source>
    </source>
</evidence>
<evidence type="ECO:0000269" key="4">
    <source>
    </source>
</evidence>
<evidence type="ECO:0000269" key="5">
    <source>
    </source>
</evidence>
<evidence type="ECO:0000269" key="6">
    <source>
    </source>
</evidence>
<evidence type="ECO:0000269" key="7">
    <source>
    </source>
</evidence>
<evidence type="ECO:0000269" key="8">
    <source>
    </source>
</evidence>
<evidence type="ECO:0000269" key="9">
    <source>
    </source>
</evidence>
<evidence type="ECO:0000269" key="10">
    <source>
    </source>
</evidence>
<evidence type="ECO:0000269" key="11">
    <source>
    </source>
</evidence>
<evidence type="ECO:0000303" key="12">
    <source>
    </source>
</evidence>
<evidence type="ECO:0000305" key="13"/>
<evidence type="ECO:0007744" key="14">
    <source>
    </source>
</evidence>
<evidence type="ECO:0007744" key="15">
    <source>
    </source>
</evidence>
<evidence type="ECO:0007744" key="16">
    <source>
    </source>
</evidence>
<evidence type="ECO:0007744" key="17">
    <source>
    </source>
</evidence>
<evidence type="ECO:0007744" key="18">
    <source>
    </source>
</evidence>
<evidence type="ECO:0007744" key="19">
    <source>
    </source>
</evidence>
<evidence type="ECO:0007744" key="20">
    <source>
    </source>
</evidence>
<evidence type="ECO:0007744" key="21">
    <source>
    </source>
</evidence>
<evidence type="ECO:0007744" key="22">
    <source>
    </source>
</evidence>
<evidence type="ECO:0007744" key="23">
    <source>
    </source>
</evidence>
<evidence type="ECO:0007744" key="24">
    <source>
    </source>
</evidence>
<evidence type="ECO:0007829" key="25">
    <source>
        <dbReference type="PDB" id="5LXM"/>
    </source>
</evidence>
<evidence type="ECO:0007829" key="26">
    <source>
        <dbReference type="PDB" id="6BJC"/>
    </source>
</evidence>
<feature type="chain" id="PRO_0000065581" description="Targeting protein for Xklp2">
    <location>
        <begin position="1"/>
        <end position="747"/>
    </location>
</feature>
<feature type="region of interest" description="Disordered" evidence="2">
    <location>
        <begin position="110"/>
        <end position="143"/>
    </location>
</feature>
<feature type="region of interest" description="Disordered" evidence="2">
    <location>
        <begin position="156"/>
        <end position="202"/>
    </location>
</feature>
<feature type="compositionally biased region" description="Basic and acidic residues" evidence="2">
    <location>
        <begin position="167"/>
        <end position="181"/>
    </location>
</feature>
<feature type="modified residue" description="Phosphothreonine" evidence="16 22">
    <location>
        <position position="59"/>
    </location>
</feature>
<feature type="modified residue" description="Phosphothreonine" evidence="16 20 22">
    <location>
        <position position="72"/>
    </location>
</feature>
<feature type="modified residue" description="Phosphoserine" evidence="22">
    <location>
        <position position="121"/>
    </location>
</feature>
<feature type="modified residue" description="Phosphoserine" evidence="22">
    <location>
        <position position="125"/>
    </location>
</feature>
<feature type="modified residue" description="N6-acetyllysine" evidence="1">
    <location>
        <position position="128"/>
    </location>
</feature>
<feature type="modified residue" description="Phosphothreonine" evidence="22">
    <location>
        <position position="147"/>
    </location>
</feature>
<feature type="modified residue" description="Phosphoserine" evidence="22">
    <location>
        <position position="257"/>
    </location>
</feature>
<feature type="modified residue" description="Phosphoserine" evidence="20">
    <location>
        <position position="292"/>
    </location>
</feature>
<feature type="modified residue" description="Phosphoserine" evidence="20 21">
    <location>
        <position position="293"/>
    </location>
</feature>
<feature type="modified residue" description="N6-acetyllysine" evidence="19">
    <location>
        <position position="305"/>
    </location>
</feature>
<feature type="modified residue" description="Phosphoserine" evidence="16 22">
    <location>
        <position position="310"/>
    </location>
</feature>
<feature type="modified residue" description="Phosphothreonine" evidence="16">
    <location>
        <position position="338"/>
    </location>
</feature>
<feature type="modified residue" description="Phosphoserine" evidence="22">
    <location>
        <position position="359"/>
    </location>
</feature>
<feature type="modified residue" description="Phosphothreonine" evidence="14 22">
    <location>
        <position position="369"/>
    </location>
</feature>
<feature type="modified residue" description="N6-acetyllysine" evidence="1">
    <location>
        <position position="375"/>
    </location>
</feature>
<feature type="modified residue" description="Phosphoserine" evidence="15 16 17 20 22">
    <location>
        <position position="486"/>
    </location>
</feature>
<feature type="modified residue" description="Phosphothreonine" evidence="22">
    <location>
        <position position="499"/>
    </location>
</feature>
<feature type="modified residue" description="Phosphoserine" evidence="14 16 17 18 20 21 22">
    <location>
        <position position="738"/>
    </location>
</feature>
<feature type="cross-link" description="Glycyl lysine isopeptide (Lys-Gly) (interchain with G-Cter in SUMO2)" evidence="24">
    <location>
        <position position="477"/>
    </location>
</feature>
<feature type="cross-link" description="Glycyl lysine isopeptide (Lys-Gly) (interchain with G-Cter in SUMO2)" evidence="24">
    <location>
        <position position="500"/>
    </location>
</feature>
<feature type="cross-link" description="Glycyl lysine isopeptide (Lys-Gly) (interchain with G-Cter in SUMO2)" evidence="23 24">
    <location>
        <position position="641"/>
    </location>
</feature>
<feature type="cross-link" description="Glycyl lysine isopeptide (Lys-Gly) (interchain with G-Cter in SUMO2)" evidence="24">
    <location>
        <position position="740"/>
    </location>
</feature>
<feature type="splice variant" id="VSP_057355" description="In isoform 2." evidence="12">
    <original>I</original>
    <variation>IKTGSCSVTQAGVQWRDHGSLQCPTPGLKQSSCLSLP</variation>
    <location>
        <position position="351"/>
    </location>
</feature>
<feature type="sequence variant" id="VAR_036269" description="In a colorectal cancer sample; somatic mutation." evidence="4">
    <original>T</original>
    <variation>N</variation>
    <location>
        <position position="464"/>
    </location>
</feature>
<feature type="sequence conflict" description="In Ref. 3; BAA76931." evidence="13" ref="3">
    <original>K</original>
    <variation>N</variation>
    <location>
        <position position="182"/>
    </location>
</feature>
<feature type="sequence conflict" description="In Ref. 1; BAA85893." evidence="13" ref="1">
    <original>K</original>
    <variation>E</variation>
    <location>
        <position position="273"/>
    </location>
</feature>
<feature type="turn" evidence="25">
    <location>
        <begin position="19"/>
        <end position="21"/>
    </location>
</feature>
<feature type="helix" evidence="25">
    <location>
        <begin position="30"/>
        <end position="32"/>
    </location>
</feature>
<feature type="helix" evidence="25">
    <location>
        <begin position="33"/>
        <end position="41"/>
    </location>
</feature>
<feature type="helix" evidence="26">
    <location>
        <begin position="327"/>
        <end position="336"/>
    </location>
</feature>
<name>TPX2_HUMAN</name>
<accession>Q9ULW0</accession>
<accession>Q96RR5</accession>
<accession>Q9H1R4</accession>
<accession>Q9NRA3</accession>
<accession>Q9UFN9</accession>
<accession>Q9UL00</accession>
<accession>Q9Y2M1</accession>
<protein>
    <recommendedName>
        <fullName>Targeting protein for Xklp2</fullName>
    </recommendedName>
    <alternativeName>
        <fullName>Differentially expressed in cancerous and non-cancerous lung cells 2</fullName>
        <shortName>DIL-2</shortName>
    </alternativeName>
    <alternativeName>
        <fullName>Hepatocellular carcinoma-associated antigen 519</fullName>
    </alternativeName>
    <alternativeName>
        <fullName>Hepatocellular carcinoma-associated antigen 90</fullName>
    </alternativeName>
    <alternativeName>
        <fullName>Protein fls353</fullName>
    </alternativeName>
    <alternativeName>
        <fullName>Restricted expression proliferation-associated protein 100</fullName>
        <shortName>p100</shortName>
    </alternativeName>
</protein>
<keyword id="KW-0002">3D-structure</keyword>
<keyword id="KW-0007">Acetylation</keyword>
<keyword id="KW-0025">Alternative splicing</keyword>
<keyword id="KW-0053">Apoptosis</keyword>
<keyword id="KW-0131">Cell cycle</keyword>
<keyword id="KW-0132">Cell division</keyword>
<keyword id="KW-0963">Cytoplasm</keyword>
<keyword id="KW-0206">Cytoskeleton</keyword>
<keyword id="KW-1017">Isopeptide bond</keyword>
<keyword id="KW-0493">Microtubule</keyword>
<keyword id="KW-0498">Mitosis</keyword>
<keyword id="KW-0539">Nucleus</keyword>
<keyword id="KW-0597">Phosphoprotein</keyword>
<keyword id="KW-1267">Proteomics identification</keyword>
<keyword id="KW-1185">Reference proteome</keyword>
<keyword id="KW-0832">Ubl conjugation</keyword>
<dbReference type="EMBL" id="AB027467">
    <property type="protein sequence ID" value="BAA85893.1"/>
    <property type="molecule type" value="mRNA"/>
</dbReference>
<dbReference type="EMBL" id="AF098158">
    <property type="protein sequence ID" value="AAF03248.1"/>
    <property type="molecule type" value="mRNA"/>
</dbReference>
<dbReference type="EMBL" id="AB024704">
    <property type="protein sequence ID" value="BAA76931.1"/>
    <property type="molecule type" value="mRNA"/>
</dbReference>
<dbReference type="EMBL" id="AF146731">
    <property type="protein sequence ID" value="AAD33965.1"/>
    <property type="molecule type" value="mRNA"/>
</dbReference>
<dbReference type="EMBL" id="AF287265">
    <property type="protein sequence ID" value="AAK83033.1"/>
    <property type="molecule type" value="mRNA"/>
</dbReference>
<dbReference type="EMBL" id="AL160175">
    <property type="status" value="NOT_ANNOTATED_CDS"/>
    <property type="molecule type" value="Genomic_DNA"/>
</dbReference>
<dbReference type="EMBL" id="CH471077">
    <property type="protein sequence ID" value="EAW76418.1"/>
    <property type="molecule type" value="Genomic_DNA"/>
</dbReference>
<dbReference type="EMBL" id="CH471077">
    <property type="protein sequence ID" value="EAW76422.1"/>
    <property type="molecule type" value="Genomic_DNA"/>
</dbReference>
<dbReference type="EMBL" id="BC004136">
    <property type="protein sequence ID" value="AAH04136.1"/>
    <property type="molecule type" value="mRNA"/>
</dbReference>
<dbReference type="EMBL" id="BC020207">
    <property type="protein sequence ID" value="AAH20207.1"/>
    <property type="molecule type" value="mRNA"/>
</dbReference>
<dbReference type="EMBL" id="AL117534">
    <property type="protein sequence ID" value="CAB55982.1"/>
    <property type="molecule type" value="mRNA"/>
</dbReference>
<dbReference type="EMBL" id="AF244547">
    <property type="protein sequence ID" value="AAF81695.1"/>
    <property type="molecule type" value="mRNA"/>
</dbReference>
<dbReference type="CCDS" id="CCDS13190.1">
    <molecule id="Q9ULW0-1"/>
</dbReference>
<dbReference type="PIR" id="T17292">
    <property type="entry name" value="T17292"/>
</dbReference>
<dbReference type="RefSeq" id="NP_036244.2">
    <molecule id="Q9ULW0-1"/>
    <property type="nucleotide sequence ID" value="NM_012112.4"/>
</dbReference>
<dbReference type="RefSeq" id="XP_011526999.1">
    <molecule id="Q9ULW0-1"/>
    <property type="nucleotide sequence ID" value="XM_011528697.3"/>
</dbReference>
<dbReference type="RefSeq" id="XP_011527001.1">
    <molecule id="Q9ULW0-1"/>
    <property type="nucleotide sequence ID" value="XM_011528699.3"/>
</dbReference>
<dbReference type="RefSeq" id="XP_054179180.1">
    <molecule id="Q9ULW0-1"/>
    <property type="nucleotide sequence ID" value="XM_054323205.1"/>
</dbReference>
<dbReference type="RefSeq" id="XP_054179181.1">
    <molecule id="Q9ULW0-1"/>
    <property type="nucleotide sequence ID" value="XM_054323206.1"/>
</dbReference>
<dbReference type="PDB" id="1OL5">
    <property type="method" value="X-ray"/>
    <property type="resolution" value="2.50 A"/>
    <property type="chains" value="B=1-43"/>
</dbReference>
<dbReference type="PDB" id="3E5A">
    <property type="method" value="X-ray"/>
    <property type="resolution" value="2.30 A"/>
    <property type="chains" value="B=1-43"/>
</dbReference>
<dbReference type="PDB" id="3HA6">
    <property type="method" value="X-ray"/>
    <property type="resolution" value="2.36 A"/>
    <property type="chains" value="B=1-43"/>
</dbReference>
<dbReference type="PDB" id="4C3P">
    <property type="method" value="X-ray"/>
    <property type="resolution" value="2.69 A"/>
    <property type="chains" value="B/E=1-43"/>
</dbReference>
<dbReference type="PDB" id="5LXM">
    <property type="method" value="X-ray"/>
    <property type="resolution" value="2.08 A"/>
    <property type="chains" value="D=6-43"/>
</dbReference>
<dbReference type="PDB" id="6BJC">
    <property type="method" value="EM"/>
    <property type="resolution" value="3.30 A"/>
    <property type="chains" value="P/T=1-747"/>
</dbReference>
<dbReference type="PDB" id="6VPG">
    <property type="method" value="X-ray"/>
    <property type="resolution" value="2.64 A"/>
    <property type="chains" value="A=7-21"/>
</dbReference>
<dbReference type="PDB" id="6VPH">
    <property type="method" value="X-ray"/>
    <property type="resolution" value="2.14 A"/>
    <property type="chains" value="A=7-21"/>
</dbReference>
<dbReference type="PDB" id="6VPI">
    <property type="method" value="X-ray"/>
    <property type="resolution" value="2.00 A"/>
    <property type="chains" value="A=7-21"/>
</dbReference>
<dbReference type="PDB" id="6VPJ">
    <property type="method" value="X-ray"/>
    <property type="resolution" value="2.10 A"/>
    <property type="chains" value="A=7-21"/>
</dbReference>
<dbReference type="PDB" id="6VPL">
    <property type="method" value="X-ray"/>
    <property type="resolution" value="1.86 A"/>
    <property type="chains" value="A/B=7-21"/>
</dbReference>
<dbReference type="PDB" id="6VPM">
    <property type="method" value="X-ray"/>
    <property type="resolution" value="1.58 A"/>
    <property type="chains" value="A/B=7-21"/>
</dbReference>
<dbReference type="PDB" id="6XKA">
    <property type="method" value="X-ray"/>
    <property type="resolution" value="2.65 A"/>
    <property type="chains" value="A=7-21"/>
</dbReference>
<dbReference type="PDBsum" id="1OL5"/>
<dbReference type="PDBsum" id="3E5A"/>
<dbReference type="PDBsum" id="3HA6"/>
<dbReference type="PDBsum" id="4C3P"/>
<dbReference type="PDBsum" id="5LXM"/>
<dbReference type="PDBsum" id="6BJC"/>
<dbReference type="PDBsum" id="6VPG"/>
<dbReference type="PDBsum" id="6VPH"/>
<dbReference type="PDBsum" id="6VPI"/>
<dbReference type="PDBsum" id="6VPJ"/>
<dbReference type="PDBsum" id="6VPL"/>
<dbReference type="PDBsum" id="6VPM"/>
<dbReference type="PDBsum" id="6XKA"/>
<dbReference type="EMDB" id="EMD-7101"/>
<dbReference type="SMR" id="Q9ULW0"/>
<dbReference type="BioGRID" id="116624">
    <property type="interactions" value="209"/>
</dbReference>
<dbReference type="CORUM" id="Q9ULW0"/>
<dbReference type="DIP" id="DIP-36727N"/>
<dbReference type="DIP" id="DIP-46212N"/>
<dbReference type="FunCoup" id="Q9ULW0">
    <property type="interactions" value="719"/>
</dbReference>
<dbReference type="IntAct" id="Q9ULW0">
    <property type="interactions" value="142"/>
</dbReference>
<dbReference type="MINT" id="Q9ULW0"/>
<dbReference type="STRING" id="9606.ENSP00000300403"/>
<dbReference type="BindingDB" id="Q9ULW0"/>
<dbReference type="ChEMBL" id="CHEMBL5389"/>
<dbReference type="GlyGen" id="Q9ULW0">
    <property type="glycosylation" value="7 sites, 3 N-linked glycans (3 sites), 1 O-linked glycan (3 sites)"/>
</dbReference>
<dbReference type="iPTMnet" id="Q9ULW0"/>
<dbReference type="PhosphoSitePlus" id="Q9ULW0"/>
<dbReference type="SwissPalm" id="Q9ULW0"/>
<dbReference type="BioMuta" id="TPX2"/>
<dbReference type="DMDM" id="13124096"/>
<dbReference type="CPTAC" id="CPTAC-1016"/>
<dbReference type="jPOST" id="Q9ULW0"/>
<dbReference type="MassIVE" id="Q9ULW0"/>
<dbReference type="PaxDb" id="9606-ENSP00000300403"/>
<dbReference type="PeptideAtlas" id="Q9ULW0"/>
<dbReference type="ProteomicsDB" id="78016"/>
<dbReference type="ProteomicsDB" id="85139">
    <molecule id="Q9ULW0-1"/>
</dbReference>
<dbReference type="Pumba" id="Q9ULW0"/>
<dbReference type="Antibodypedia" id="1228">
    <property type="antibodies" value="641 antibodies from 38 providers"/>
</dbReference>
<dbReference type="DNASU" id="22974"/>
<dbReference type="Ensembl" id="ENST00000300403.11">
    <molecule id="Q9ULW0-1"/>
    <property type="protein sequence ID" value="ENSP00000300403.6"/>
    <property type="gene ID" value="ENSG00000088325.16"/>
</dbReference>
<dbReference type="Ensembl" id="ENST00000340513.4">
    <molecule id="Q9ULW0-2"/>
    <property type="protein sequence ID" value="ENSP00000341145.4"/>
    <property type="gene ID" value="ENSG00000088325.16"/>
</dbReference>
<dbReference type="GeneID" id="22974"/>
<dbReference type="KEGG" id="hsa:22974"/>
<dbReference type="MANE-Select" id="ENST00000300403.11">
    <property type="protein sequence ID" value="ENSP00000300403.6"/>
    <property type="RefSeq nucleotide sequence ID" value="NM_012112.5"/>
    <property type="RefSeq protein sequence ID" value="NP_036244.2"/>
</dbReference>
<dbReference type="UCSC" id="uc002wwp.2">
    <molecule id="Q9ULW0-1"/>
    <property type="organism name" value="human"/>
</dbReference>
<dbReference type="AGR" id="HGNC:1249"/>
<dbReference type="CTD" id="22974"/>
<dbReference type="DisGeNET" id="22974"/>
<dbReference type="GeneCards" id="TPX2"/>
<dbReference type="HGNC" id="HGNC:1249">
    <property type="gene designation" value="TPX2"/>
</dbReference>
<dbReference type="HPA" id="ENSG00000088325">
    <property type="expression patterns" value="Tissue enhanced (bone marrow, lymphoid tissue, testis)"/>
</dbReference>
<dbReference type="MIM" id="605917">
    <property type="type" value="gene"/>
</dbReference>
<dbReference type="neXtProt" id="NX_Q9ULW0"/>
<dbReference type="OpenTargets" id="ENSG00000088325"/>
<dbReference type="PharmGKB" id="PA25638"/>
<dbReference type="VEuPathDB" id="HostDB:ENSG00000088325"/>
<dbReference type="eggNOG" id="ENOG502QVQS">
    <property type="taxonomic scope" value="Eukaryota"/>
</dbReference>
<dbReference type="GeneTree" id="ENSGT00390000009842"/>
<dbReference type="HOGENOM" id="CLU_022592_0_0_1"/>
<dbReference type="InParanoid" id="Q9ULW0"/>
<dbReference type="OMA" id="GRHTVSC"/>
<dbReference type="OrthoDB" id="1684416at2759"/>
<dbReference type="PAN-GO" id="Q9ULW0">
    <property type="GO annotations" value="5 GO annotations based on evolutionary models"/>
</dbReference>
<dbReference type="PhylomeDB" id="Q9ULW0"/>
<dbReference type="TreeFam" id="TF328997"/>
<dbReference type="PathwayCommons" id="Q9ULW0"/>
<dbReference type="Reactome" id="R-HSA-6804756">
    <property type="pathway name" value="Regulation of TP53 Activity through Phosphorylation"/>
</dbReference>
<dbReference type="Reactome" id="R-HSA-8854518">
    <property type="pathway name" value="AURKA Activation by TPX2"/>
</dbReference>
<dbReference type="SignaLink" id="Q9ULW0"/>
<dbReference type="SIGNOR" id="Q9ULW0"/>
<dbReference type="BioGRID-ORCS" id="22974">
    <property type="hits" value="743 hits in 1166 CRISPR screens"/>
</dbReference>
<dbReference type="ChiTaRS" id="TPX2">
    <property type="organism name" value="human"/>
</dbReference>
<dbReference type="EvolutionaryTrace" id="Q9ULW0"/>
<dbReference type="GeneWiki" id="TPX2"/>
<dbReference type="GenomeRNAi" id="22974"/>
<dbReference type="Pharos" id="Q9ULW0">
    <property type="development level" value="Tbio"/>
</dbReference>
<dbReference type="PRO" id="PR:Q9ULW0"/>
<dbReference type="Proteomes" id="UP000005640">
    <property type="component" value="Chromosome 20"/>
</dbReference>
<dbReference type="RNAct" id="Q9ULW0">
    <property type="molecule type" value="protein"/>
</dbReference>
<dbReference type="Bgee" id="ENSG00000088325">
    <property type="expression patterns" value="Expressed in ventricular zone and 131 other cell types or tissues"/>
</dbReference>
<dbReference type="ExpressionAtlas" id="Q9ULW0">
    <property type="expression patterns" value="baseline and differential"/>
</dbReference>
<dbReference type="GO" id="GO:0043203">
    <property type="term" value="C:axon hillock"/>
    <property type="evidence" value="ECO:0007669"/>
    <property type="project" value="Ensembl"/>
</dbReference>
<dbReference type="GO" id="GO:0005829">
    <property type="term" value="C:cytosol"/>
    <property type="evidence" value="ECO:0000304"/>
    <property type="project" value="Reactome"/>
</dbReference>
<dbReference type="GO" id="GO:0045171">
    <property type="term" value="C:intercellular bridge"/>
    <property type="evidence" value="ECO:0000314"/>
    <property type="project" value="HPA"/>
</dbReference>
<dbReference type="GO" id="GO:0005874">
    <property type="term" value="C:microtubule"/>
    <property type="evidence" value="ECO:0007669"/>
    <property type="project" value="UniProtKB-KW"/>
</dbReference>
<dbReference type="GO" id="GO:0015630">
    <property type="term" value="C:microtubule cytoskeleton"/>
    <property type="evidence" value="ECO:0000314"/>
    <property type="project" value="LIFEdb"/>
</dbReference>
<dbReference type="GO" id="GO:0072686">
    <property type="term" value="C:mitotic spindle"/>
    <property type="evidence" value="ECO:0000314"/>
    <property type="project" value="HPA"/>
</dbReference>
<dbReference type="GO" id="GO:0005654">
    <property type="term" value="C:nucleoplasm"/>
    <property type="evidence" value="ECO:0000314"/>
    <property type="project" value="HPA"/>
</dbReference>
<dbReference type="GO" id="GO:0005634">
    <property type="term" value="C:nucleus"/>
    <property type="evidence" value="ECO:0000304"/>
    <property type="project" value="ProtInc"/>
</dbReference>
<dbReference type="GO" id="GO:0005819">
    <property type="term" value="C:spindle"/>
    <property type="evidence" value="ECO:0000314"/>
    <property type="project" value="UniProt"/>
</dbReference>
<dbReference type="GO" id="GO:0000922">
    <property type="term" value="C:spindle pole"/>
    <property type="evidence" value="ECO:0007669"/>
    <property type="project" value="UniProtKB-SubCell"/>
</dbReference>
<dbReference type="GO" id="GO:0061676">
    <property type="term" value="F:importin-alpha family protein binding"/>
    <property type="evidence" value="ECO:0000314"/>
    <property type="project" value="UniProtKB"/>
</dbReference>
<dbReference type="GO" id="GO:0060090">
    <property type="term" value="F:molecular adaptor activity"/>
    <property type="evidence" value="ECO:0000314"/>
    <property type="project" value="UniProt"/>
</dbReference>
<dbReference type="GO" id="GO:0019901">
    <property type="term" value="F:protein kinase binding"/>
    <property type="evidence" value="ECO:0000353"/>
    <property type="project" value="UniProtKB"/>
</dbReference>
<dbReference type="GO" id="GO:0043539">
    <property type="term" value="F:protein serine/threonine kinase activator activity"/>
    <property type="evidence" value="ECO:0000314"/>
    <property type="project" value="BHF-UCL"/>
</dbReference>
<dbReference type="GO" id="GO:0032147">
    <property type="term" value="P:activation of protein kinase activity"/>
    <property type="evidence" value="ECO:0000314"/>
    <property type="project" value="UniProtKB"/>
</dbReference>
<dbReference type="GO" id="GO:0006915">
    <property type="term" value="P:apoptotic process"/>
    <property type="evidence" value="ECO:0007669"/>
    <property type="project" value="UniProtKB-KW"/>
</dbReference>
<dbReference type="GO" id="GO:0051301">
    <property type="term" value="P:cell division"/>
    <property type="evidence" value="ECO:0007669"/>
    <property type="project" value="UniProtKB-KW"/>
</dbReference>
<dbReference type="GO" id="GO:0007020">
    <property type="term" value="P:microtubule nucleation"/>
    <property type="evidence" value="ECO:0000314"/>
    <property type="project" value="CACAO"/>
</dbReference>
<dbReference type="GO" id="GO:0000278">
    <property type="term" value="P:mitotic cell cycle"/>
    <property type="evidence" value="ECO:0000304"/>
    <property type="project" value="ProtInc"/>
</dbReference>
<dbReference type="GO" id="GO:0090307">
    <property type="term" value="P:mitotic spindle assembly"/>
    <property type="evidence" value="ECO:0000314"/>
    <property type="project" value="UniProtKB"/>
</dbReference>
<dbReference type="GO" id="GO:0007026">
    <property type="term" value="P:negative regulation of microtubule depolymerization"/>
    <property type="evidence" value="ECO:0000314"/>
    <property type="project" value="CACAO"/>
</dbReference>
<dbReference type="GO" id="GO:0060236">
    <property type="term" value="P:regulation of mitotic spindle organization"/>
    <property type="evidence" value="ECO:0000250"/>
    <property type="project" value="UniProtKB"/>
</dbReference>
<dbReference type="InterPro" id="IPR015128">
    <property type="entry name" value="Aurora-A-bd"/>
</dbReference>
<dbReference type="InterPro" id="IPR027329">
    <property type="entry name" value="TPX2_C"/>
</dbReference>
<dbReference type="InterPro" id="IPR027330">
    <property type="entry name" value="TPX2_central_dom"/>
</dbReference>
<dbReference type="InterPro" id="IPR009675">
    <property type="entry name" value="TPX2_fam"/>
</dbReference>
<dbReference type="PANTHER" id="PTHR14326">
    <property type="entry name" value="TARGETING PROTEIN FOR XKLP2"/>
    <property type="match status" value="1"/>
</dbReference>
<dbReference type="PANTHER" id="PTHR14326:SF44">
    <property type="entry name" value="TARGETING PROTEIN FOR XKLP2"/>
    <property type="match status" value="1"/>
</dbReference>
<dbReference type="Pfam" id="PF09041">
    <property type="entry name" value="Aurora-A_bind"/>
    <property type="match status" value="1"/>
</dbReference>
<dbReference type="Pfam" id="PF06886">
    <property type="entry name" value="TPX2"/>
    <property type="match status" value="2"/>
</dbReference>
<dbReference type="Pfam" id="PF12214">
    <property type="entry name" value="TPX2_importin"/>
    <property type="match status" value="1"/>
</dbReference>